<dbReference type="EC" id="3.4.24.-" evidence="1"/>
<dbReference type="EMBL" id="CP000713">
    <property type="protein sequence ID" value="ABQ95155.1"/>
    <property type="molecule type" value="Genomic_DNA"/>
</dbReference>
<dbReference type="SMR" id="A5WHL4"/>
<dbReference type="STRING" id="349106.PsycPRwf_2215"/>
<dbReference type="MEROPS" id="M48.002"/>
<dbReference type="KEGG" id="prw:PsycPRwf_2215"/>
<dbReference type="eggNOG" id="COG0501">
    <property type="taxonomic scope" value="Bacteria"/>
</dbReference>
<dbReference type="HOGENOM" id="CLU_042266_1_0_6"/>
<dbReference type="GO" id="GO:0005886">
    <property type="term" value="C:plasma membrane"/>
    <property type="evidence" value="ECO:0007669"/>
    <property type="project" value="UniProtKB-SubCell"/>
</dbReference>
<dbReference type="GO" id="GO:0004222">
    <property type="term" value="F:metalloendopeptidase activity"/>
    <property type="evidence" value="ECO:0007669"/>
    <property type="project" value="UniProtKB-UniRule"/>
</dbReference>
<dbReference type="GO" id="GO:0008270">
    <property type="term" value="F:zinc ion binding"/>
    <property type="evidence" value="ECO:0007669"/>
    <property type="project" value="UniProtKB-UniRule"/>
</dbReference>
<dbReference type="GO" id="GO:0006508">
    <property type="term" value="P:proteolysis"/>
    <property type="evidence" value="ECO:0007669"/>
    <property type="project" value="UniProtKB-KW"/>
</dbReference>
<dbReference type="CDD" id="cd07335">
    <property type="entry name" value="M48B_HtpX_like"/>
    <property type="match status" value="1"/>
</dbReference>
<dbReference type="Gene3D" id="3.30.2010.10">
    <property type="entry name" value="Metalloproteases ('zincins'), catalytic domain"/>
    <property type="match status" value="1"/>
</dbReference>
<dbReference type="HAMAP" id="MF_00188">
    <property type="entry name" value="Pept_M48_protease_HtpX"/>
    <property type="match status" value="1"/>
</dbReference>
<dbReference type="InterPro" id="IPR050083">
    <property type="entry name" value="HtpX_protease"/>
</dbReference>
<dbReference type="InterPro" id="IPR022919">
    <property type="entry name" value="Pept_M48_protease_HtpX"/>
</dbReference>
<dbReference type="InterPro" id="IPR001915">
    <property type="entry name" value="Peptidase_M48"/>
</dbReference>
<dbReference type="NCBIfam" id="NF003965">
    <property type="entry name" value="PRK05457.1"/>
    <property type="match status" value="1"/>
</dbReference>
<dbReference type="PANTHER" id="PTHR43221">
    <property type="entry name" value="PROTEASE HTPX"/>
    <property type="match status" value="1"/>
</dbReference>
<dbReference type="PANTHER" id="PTHR43221:SF1">
    <property type="entry name" value="PROTEASE HTPX"/>
    <property type="match status" value="1"/>
</dbReference>
<dbReference type="Pfam" id="PF01435">
    <property type="entry name" value="Peptidase_M48"/>
    <property type="match status" value="1"/>
</dbReference>
<name>HTPX_PSYWF</name>
<proteinExistence type="inferred from homology"/>
<protein>
    <recommendedName>
        <fullName evidence="1">Protease HtpX</fullName>
        <ecNumber evidence="1">3.4.24.-</ecNumber>
    </recommendedName>
    <alternativeName>
        <fullName evidence="1">Heat shock protein HtpX</fullName>
    </alternativeName>
</protein>
<comment type="cofactor">
    <cofactor evidence="1">
        <name>Zn(2+)</name>
        <dbReference type="ChEBI" id="CHEBI:29105"/>
    </cofactor>
    <text evidence="1">Binds 1 zinc ion per subunit.</text>
</comment>
<comment type="subcellular location">
    <subcellularLocation>
        <location evidence="1">Cell inner membrane</location>
        <topology evidence="1">Multi-pass membrane protein</topology>
    </subcellularLocation>
</comment>
<comment type="similarity">
    <text evidence="1">Belongs to the peptidase M48B family.</text>
</comment>
<reference key="1">
    <citation type="submission" date="2007-05" db="EMBL/GenBank/DDBJ databases">
        <title>Complete sequence of chromosome of Psychrobacter sp. PRwf-1.</title>
        <authorList>
            <consortium name="US DOE Joint Genome Institute"/>
            <person name="Copeland A."/>
            <person name="Lucas S."/>
            <person name="Lapidus A."/>
            <person name="Barry K."/>
            <person name="Detter J.C."/>
            <person name="Glavina del Rio T."/>
            <person name="Hammon N."/>
            <person name="Israni S."/>
            <person name="Dalin E."/>
            <person name="Tice H."/>
            <person name="Pitluck S."/>
            <person name="Chain P."/>
            <person name="Malfatti S."/>
            <person name="Shin M."/>
            <person name="Vergez L."/>
            <person name="Schmutz J."/>
            <person name="Larimer F."/>
            <person name="Land M."/>
            <person name="Hauser L."/>
            <person name="Kyrpides N."/>
            <person name="Kim E."/>
            <person name="Tiedje J."/>
            <person name="Richardson P."/>
        </authorList>
    </citation>
    <scope>NUCLEOTIDE SEQUENCE [LARGE SCALE GENOMIC DNA]</scope>
    <source>
        <strain>PRwf-1</strain>
    </source>
</reference>
<keyword id="KW-0997">Cell inner membrane</keyword>
<keyword id="KW-1003">Cell membrane</keyword>
<keyword id="KW-0378">Hydrolase</keyword>
<keyword id="KW-0472">Membrane</keyword>
<keyword id="KW-0479">Metal-binding</keyword>
<keyword id="KW-0482">Metalloprotease</keyword>
<keyword id="KW-0645">Protease</keyword>
<keyword id="KW-0812">Transmembrane</keyword>
<keyword id="KW-1133">Transmembrane helix</keyword>
<keyword id="KW-0862">Zinc</keyword>
<sequence>MMRIGLFLLTNLAVLVVFSIVFGILSSVFGLGSVHGAGGLNIASLAVMCAVYGMIGSMISLFLSKWMAKRSTGTVVIEQPRNASEQWLVETVAKQAKAVNIDMPEVGIFDNAQPNAFATGWNKNKALVAVSSGLLHTMTPDEVEAVLAHEIGHVANGDMVTLALIQGVVNAFVMFFARIVGSFVDRVVFKNEDGPGIGYFVTSIVMDILLGFLASAIVMWFSRQREFRADAMGAKLAGRDKMISALNALRPAEARPDQMPENMQAFAISSGQTQGFSIANFFRSHPTLDDRIEALKKYTPGQS</sequence>
<evidence type="ECO:0000255" key="1">
    <source>
        <dbReference type="HAMAP-Rule" id="MF_00188"/>
    </source>
</evidence>
<gene>
    <name evidence="1" type="primary">htpX</name>
    <name type="ordered locus">PsycPRwf_2215</name>
</gene>
<accession>A5WHL4</accession>
<feature type="chain" id="PRO_1000071692" description="Protease HtpX">
    <location>
        <begin position="1"/>
        <end position="303"/>
    </location>
</feature>
<feature type="transmembrane region" description="Helical" evidence="1">
    <location>
        <begin position="4"/>
        <end position="24"/>
    </location>
</feature>
<feature type="transmembrane region" description="Helical" evidence="1">
    <location>
        <begin position="42"/>
        <end position="62"/>
    </location>
</feature>
<feature type="transmembrane region" description="Helical" evidence="1">
    <location>
        <begin position="157"/>
        <end position="177"/>
    </location>
</feature>
<feature type="transmembrane region" description="Helical" evidence="1">
    <location>
        <begin position="200"/>
        <end position="220"/>
    </location>
</feature>
<feature type="active site" evidence="1">
    <location>
        <position position="150"/>
    </location>
</feature>
<feature type="binding site" evidence="1">
    <location>
        <position position="149"/>
    </location>
    <ligand>
        <name>Zn(2+)</name>
        <dbReference type="ChEBI" id="CHEBI:29105"/>
        <note>catalytic</note>
    </ligand>
</feature>
<feature type="binding site" evidence="1">
    <location>
        <position position="153"/>
    </location>
    <ligand>
        <name>Zn(2+)</name>
        <dbReference type="ChEBI" id="CHEBI:29105"/>
        <note>catalytic</note>
    </ligand>
</feature>
<feature type="binding site" evidence="1">
    <location>
        <position position="226"/>
    </location>
    <ligand>
        <name>Zn(2+)</name>
        <dbReference type="ChEBI" id="CHEBI:29105"/>
        <note>catalytic</note>
    </ligand>
</feature>
<organism>
    <name type="scientific">Psychrobacter sp. (strain PRwf-1)</name>
    <dbReference type="NCBI Taxonomy" id="349106"/>
    <lineage>
        <taxon>Bacteria</taxon>
        <taxon>Pseudomonadati</taxon>
        <taxon>Pseudomonadota</taxon>
        <taxon>Gammaproteobacteria</taxon>
        <taxon>Moraxellales</taxon>
        <taxon>Moraxellaceae</taxon>
        <taxon>Psychrobacter</taxon>
    </lineage>
</organism>